<proteinExistence type="inferred from homology"/>
<comment type="function">
    <text evidence="1">Converts heme B (protoheme IX) to heme O by substitution of the vinyl group on carbon 2 of heme B porphyrin ring with a hydroxyethyl farnesyl side group.</text>
</comment>
<comment type="catalytic activity">
    <reaction evidence="1">
        <text>heme b + (2E,6E)-farnesyl diphosphate + H2O = Fe(II)-heme o + diphosphate</text>
        <dbReference type="Rhea" id="RHEA:28070"/>
        <dbReference type="ChEBI" id="CHEBI:15377"/>
        <dbReference type="ChEBI" id="CHEBI:33019"/>
        <dbReference type="ChEBI" id="CHEBI:60344"/>
        <dbReference type="ChEBI" id="CHEBI:60530"/>
        <dbReference type="ChEBI" id="CHEBI:175763"/>
        <dbReference type="EC" id="2.5.1.141"/>
    </reaction>
</comment>
<comment type="pathway">
    <text evidence="1">Porphyrin-containing compound metabolism; heme O biosynthesis; heme O from protoheme: step 1/1.</text>
</comment>
<comment type="subcellular location">
    <subcellularLocation>
        <location evidence="1">Cell membrane</location>
        <topology evidence="1">Multi-pass membrane protein</topology>
    </subcellularLocation>
</comment>
<comment type="miscellaneous">
    <text evidence="1">Carbon 2 of the heme B porphyrin ring is defined according to the Fischer nomenclature.</text>
</comment>
<comment type="similarity">
    <text evidence="1">Belongs to the UbiA prenyltransferase family. Protoheme IX farnesyltransferase subfamily.</text>
</comment>
<feature type="chain" id="PRO_1000203460" description="Protoheme IX farnesyltransferase">
    <location>
        <begin position="1"/>
        <end position="285"/>
    </location>
</feature>
<feature type="transmembrane region" description="Helical" evidence="1">
    <location>
        <begin position="13"/>
        <end position="33"/>
    </location>
</feature>
<feature type="transmembrane region" description="Helical" evidence="1">
    <location>
        <begin position="40"/>
        <end position="60"/>
    </location>
</feature>
<feature type="transmembrane region" description="Helical" evidence="1">
    <location>
        <begin position="89"/>
        <end position="109"/>
    </location>
</feature>
<feature type="transmembrane region" description="Helical" evidence="1">
    <location>
        <begin position="110"/>
        <end position="130"/>
    </location>
</feature>
<feature type="transmembrane region" description="Helical" evidence="1">
    <location>
        <begin position="137"/>
        <end position="157"/>
    </location>
</feature>
<feature type="transmembrane region" description="Helical" evidence="1">
    <location>
        <begin position="165"/>
        <end position="185"/>
    </location>
</feature>
<feature type="transmembrane region" description="Helical" evidence="1">
    <location>
        <begin position="194"/>
        <end position="214"/>
    </location>
</feature>
<feature type="transmembrane region" description="Helical" evidence="1">
    <location>
        <begin position="230"/>
        <end position="252"/>
    </location>
</feature>
<feature type="transmembrane region" description="Helical" evidence="1">
    <location>
        <begin position="265"/>
        <end position="285"/>
    </location>
</feature>
<sequence length="285" mass="31250">MSLQQKIKAYLKLGKLGVVSLLDLAAVAGAFLAYKHGISLLPIIPMFIGGTLASMGAMIINSGIEIDRDKVMSRTSKRPTVVGYVNRKEAIIVGSLLAILGTALGFIDNILTAFFIALGVVIYIFVYTILLKPRTWLNIVIGGFAGSAAAWAGYTSLTNSLTLEGFLLGFLIFMWTPGHFWSLALKYREDYVNAHYPMLPAVVGITTSARAIAISNALMIPIVLLLGYYINLIALIAFSILSLFLMFLSYRLILNPTKEEAIKSFIFSNIYLMLILLIMIIVKLI</sequence>
<evidence type="ECO:0000255" key="1">
    <source>
        <dbReference type="HAMAP-Rule" id="MF_00154"/>
    </source>
</evidence>
<name>COXX_SACI6</name>
<protein>
    <recommendedName>
        <fullName evidence="1">Protoheme IX farnesyltransferase</fullName>
        <ecNumber evidence="1">2.5.1.141</ecNumber>
    </recommendedName>
    <alternativeName>
        <fullName evidence="1">Heme B farnesyltransferase</fullName>
    </alternativeName>
    <alternativeName>
        <fullName evidence="1">Heme O synthase</fullName>
    </alternativeName>
</protein>
<gene>
    <name evidence="1" type="primary">ctaB</name>
    <name type="ordered locus">M164_1477</name>
</gene>
<accession>C4KHL5</accession>
<organism>
    <name type="scientific">Saccharolobus islandicus (strain M.16.4 / Kamchatka #3)</name>
    <name type="common">Sulfolobus islandicus</name>
    <dbReference type="NCBI Taxonomy" id="426118"/>
    <lineage>
        <taxon>Archaea</taxon>
        <taxon>Thermoproteota</taxon>
        <taxon>Thermoprotei</taxon>
        <taxon>Sulfolobales</taxon>
        <taxon>Sulfolobaceae</taxon>
        <taxon>Saccharolobus</taxon>
    </lineage>
</organism>
<reference key="1">
    <citation type="journal article" date="2009" name="Proc. Natl. Acad. Sci. U.S.A.">
        <title>Biogeography of the Sulfolobus islandicus pan-genome.</title>
        <authorList>
            <person name="Reno M.L."/>
            <person name="Held N.L."/>
            <person name="Fields C.J."/>
            <person name="Burke P.V."/>
            <person name="Whitaker R.J."/>
        </authorList>
    </citation>
    <scope>NUCLEOTIDE SEQUENCE [LARGE SCALE GENOMIC DNA]</scope>
    <source>
        <strain>M.16.4 / Kamchatka #3</strain>
    </source>
</reference>
<dbReference type="EC" id="2.5.1.141" evidence="1"/>
<dbReference type="EMBL" id="CP001402">
    <property type="protein sequence ID" value="ACR42079.1"/>
    <property type="molecule type" value="Genomic_DNA"/>
</dbReference>
<dbReference type="SMR" id="C4KHL5"/>
<dbReference type="KEGG" id="sid:M164_1477"/>
<dbReference type="HOGENOM" id="CLU_029631_0_1_2"/>
<dbReference type="UniPathway" id="UPA00834">
    <property type="reaction ID" value="UER00712"/>
</dbReference>
<dbReference type="Proteomes" id="UP000001479">
    <property type="component" value="Chromosome"/>
</dbReference>
<dbReference type="GO" id="GO:0005886">
    <property type="term" value="C:plasma membrane"/>
    <property type="evidence" value="ECO:0007669"/>
    <property type="project" value="UniProtKB-SubCell"/>
</dbReference>
<dbReference type="GO" id="GO:0008495">
    <property type="term" value="F:protoheme IX farnesyltransferase activity"/>
    <property type="evidence" value="ECO:0007669"/>
    <property type="project" value="UniProtKB-UniRule"/>
</dbReference>
<dbReference type="GO" id="GO:0048034">
    <property type="term" value="P:heme O biosynthetic process"/>
    <property type="evidence" value="ECO:0007669"/>
    <property type="project" value="UniProtKB-UniRule"/>
</dbReference>
<dbReference type="CDD" id="cd13957">
    <property type="entry name" value="PT_UbiA_Cox10"/>
    <property type="match status" value="1"/>
</dbReference>
<dbReference type="FunFam" id="1.10.357.140:FF:000018">
    <property type="entry name" value="Protoheme IX farnesyltransferase"/>
    <property type="match status" value="1"/>
</dbReference>
<dbReference type="Gene3D" id="1.10.357.140">
    <property type="entry name" value="UbiA prenyltransferase"/>
    <property type="match status" value="1"/>
</dbReference>
<dbReference type="HAMAP" id="MF_00154">
    <property type="entry name" value="CyoE_CtaB"/>
    <property type="match status" value="1"/>
</dbReference>
<dbReference type="InterPro" id="IPR006369">
    <property type="entry name" value="Protohaem_IX_farnesylTrfase"/>
</dbReference>
<dbReference type="InterPro" id="IPR000537">
    <property type="entry name" value="UbiA_prenyltransferase"/>
</dbReference>
<dbReference type="InterPro" id="IPR044878">
    <property type="entry name" value="UbiA_sf"/>
</dbReference>
<dbReference type="NCBIfam" id="TIGR01473">
    <property type="entry name" value="cyoE_ctaB"/>
    <property type="match status" value="1"/>
</dbReference>
<dbReference type="PANTHER" id="PTHR43448">
    <property type="entry name" value="PROTOHEME IX FARNESYLTRANSFERASE, MITOCHONDRIAL"/>
    <property type="match status" value="1"/>
</dbReference>
<dbReference type="PANTHER" id="PTHR43448:SF2">
    <property type="entry name" value="PROTOHEME IX FARNESYLTRANSFERASE, MITOCHONDRIAL"/>
    <property type="match status" value="1"/>
</dbReference>
<dbReference type="Pfam" id="PF01040">
    <property type="entry name" value="UbiA"/>
    <property type="match status" value="1"/>
</dbReference>
<keyword id="KW-1003">Cell membrane</keyword>
<keyword id="KW-0350">Heme biosynthesis</keyword>
<keyword id="KW-0472">Membrane</keyword>
<keyword id="KW-0808">Transferase</keyword>
<keyword id="KW-0812">Transmembrane</keyword>
<keyword id="KW-1133">Transmembrane helix</keyword>